<sequence length="253" mass="27620">MMPILVTLNKISVTFGSRRVLNDISLSLRPGKILTLLGPNGAGKSTLVRVVLGLIPPSSGSLVREPGLRIGYVPQKLHLDATLPLTVSRFMRLKPGVKKADILPALTRVQAAHLLDQPMQKLSGGENQRVLLARALLNRPQLLVLDEPTQGVDVNGQLALYDLIEQLRKELGCAVLMVSHDLHLVMAKTDEVLCLNQHICCSGAPEVVSTHPEFIAMFGNRGAEQLAVYRHNHNHRHDLHGKIILKNSGSRGA</sequence>
<name>ZNUC_YERPN</name>
<feature type="chain" id="PRO_0000281571" description="Zinc import ATP-binding protein ZnuC">
    <location>
        <begin position="1"/>
        <end position="253"/>
    </location>
</feature>
<feature type="domain" description="ABC transporter" evidence="1">
    <location>
        <begin position="6"/>
        <end position="227"/>
    </location>
</feature>
<feature type="binding site" evidence="1">
    <location>
        <begin position="38"/>
        <end position="45"/>
    </location>
    <ligand>
        <name>ATP</name>
        <dbReference type="ChEBI" id="CHEBI:30616"/>
    </ligand>
</feature>
<gene>
    <name evidence="1" type="primary">znuC</name>
    <name type="ordered locus">YPN_1537</name>
</gene>
<comment type="function">
    <text evidence="1">Part of the ABC transporter complex ZnuABC involved in zinc import. Responsible for energy coupling to the transport system.</text>
</comment>
<comment type="catalytic activity">
    <reaction evidence="1">
        <text>Zn(2+)(out) + ATP(in) + H2O(in) = Zn(2+)(in) + ADP(in) + phosphate(in) + H(+)(in)</text>
        <dbReference type="Rhea" id="RHEA:29795"/>
        <dbReference type="ChEBI" id="CHEBI:15377"/>
        <dbReference type="ChEBI" id="CHEBI:15378"/>
        <dbReference type="ChEBI" id="CHEBI:29105"/>
        <dbReference type="ChEBI" id="CHEBI:30616"/>
        <dbReference type="ChEBI" id="CHEBI:43474"/>
        <dbReference type="ChEBI" id="CHEBI:456216"/>
        <dbReference type="EC" id="7.2.2.20"/>
    </reaction>
</comment>
<comment type="subunit">
    <text evidence="1">The complex is composed of two ATP-binding proteins (ZnuC), two transmembrane proteins (ZnuB) and a solute-binding protein (ZnuA).</text>
</comment>
<comment type="subcellular location">
    <subcellularLocation>
        <location evidence="1">Cell inner membrane</location>
        <topology evidence="1">Peripheral membrane protein</topology>
    </subcellularLocation>
</comment>
<comment type="similarity">
    <text evidence="1">Belongs to the ABC transporter superfamily. Zinc importer (TC 3.A.1.15.5) family.</text>
</comment>
<proteinExistence type="inferred from homology"/>
<evidence type="ECO:0000255" key="1">
    <source>
        <dbReference type="HAMAP-Rule" id="MF_01725"/>
    </source>
</evidence>
<accession>Q1CJG3</accession>
<protein>
    <recommendedName>
        <fullName evidence="1">Zinc import ATP-binding protein ZnuC</fullName>
        <ecNumber evidence="1">7.2.2.20</ecNumber>
    </recommendedName>
</protein>
<dbReference type="EC" id="7.2.2.20" evidence="1"/>
<dbReference type="EMBL" id="CP000305">
    <property type="protein sequence ID" value="ABG17867.1"/>
    <property type="molecule type" value="Genomic_DNA"/>
</dbReference>
<dbReference type="SMR" id="Q1CJG3"/>
<dbReference type="KEGG" id="ypn:YPN_1537"/>
<dbReference type="HOGENOM" id="CLU_000604_1_11_6"/>
<dbReference type="Proteomes" id="UP000008936">
    <property type="component" value="Chromosome"/>
</dbReference>
<dbReference type="GO" id="GO:0005886">
    <property type="term" value="C:plasma membrane"/>
    <property type="evidence" value="ECO:0007669"/>
    <property type="project" value="UniProtKB-SubCell"/>
</dbReference>
<dbReference type="GO" id="GO:0015633">
    <property type="term" value="F:ABC-type zinc transporter activity"/>
    <property type="evidence" value="ECO:0007669"/>
    <property type="project" value="UniProtKB-EC"/>
</dbReference>
<dbReference type="GO" id="GO:0005524">
    <property type="term" value="F:ATP binding"/>
    <property type="evidence" value="ECO:0007669"/>
    <property type="project" value="UniProtKB-KW"/>
</dbReference>
<dbReference type="GO" id="GO:0016887">
    <property type="term" value="F:ATP hydrolysis activity"/>
    <property type="evidence" value="ECO:0007669"/>
    <property type="project" value="InterPro"/>
</dbReference>
<dbReference type="GO" id="GO:0010043">
    <property type="term" value="P:response to zinc ion"/>
    <property type="evidence" value="ECO:0007669"/>
    <property type="project" value="TreeGrafter"/>
</dbReference>
<dbReference type="CDD" id="cd03235">
    <property type="entry name" value="ABC_Metallic_Cations"/>
    <property type="match status" value="1"/>
</dbReference>
<dbReference type="FunFam" id="3.40.50.300:FF:000392">
    <property type="entry name" value="Zinc import ATP-binding protein ZnuC"/>
    <property type="match status" value="1"/>
</dbReference>
<dbReference type="Gene3D" id="3.40.50.300">
    <property type="entry name" value="P-loop containing nucleotide triphosphate hydrolases"/>
    <property type="match status" value="1"/>
</dbReference>
<dbReference type="InterPro" id="IPR003593">
    <property type="entry name" value="AAA+_ATPase"/>
</dbReference>
<dbReference type="InterPro" id="IPR003439">
    <property type="entry name" value="ABC_transporter-like_ATP-bd"/>
</dbReference>
<dbReference type="InterPro" id="IPR050153">
    <property type="entry name" value="Metal_Ion_Import_ABC"/>
</dbReference>
<dbReference type="InterPro" id="IPR027417">
    <property type="entry name" value="P-loop_NTPase"/>
</dbReference>
<dbReference type="NCBIfam" id="NF007090">
    <property type="entry name" value="PRK09544.1"/>
    <property type="match status" value="1"/>
</dbReference>
<dbReference type="PANTHER" id="PTHR42734">
    <property type="entry name" value="METAL TRANSPORT SYSTEM ATP-BINDING PROTEIN TM_0124-RELATED"/>
    <property type="match status" value="1"/>
</dbReference>
<dbReference type="PANTHER" id="PTHR42734:SF9">
    <property type="entry name" value="ZINC IMPORT ATP-BINDING PROTEIN ZNUC"/>
    <property type="match status" value="1"/>
</dbReference>
<dbReference type="Pfam" id="PF00005">
    <property type="entry name" value="ABC_tran"/>
    <property type="match status" value="1"/>
</dbReference>
<dbReference type="SMART" id="SM00382">
    <property type="entry name" value="AAA"/>
    <property type="match status" value="1"/>
</dbReference>
<dbReference type="SUPFAM" id="SSF52540">
    <property type="entry name" value="P-loop containing nucleoside triphosphate hydrolases"/>
    <property type="match status" value="1"/>
</dbReference>
<dbReference type="PROSITE" id="PS50893">
    <property type="entry name" value="ABC_TRANSPORTER_2"/>
    <property type="match status" value="1"/>
</dbReference>
<dbReference type="PROSITE" id="PS51298">
    <property type="entry name" value="ZNUC"/>
    <property type="match status" value="1"/>
</dbReference>
<organism>
    <name type="scientific">Yersinia pestis bv. Antiqua (strain Nepal516)</name>
    <dbReference type="NCBI Taxonomy" id="377628"/>
    <lineage>
        <taxon>Bacteria</taxon>
        <taxon>Pseudomonadati</taxon>
        <taxon>Pseudomonadota</taxon>
        <taxon>Gammaproteobacteria</taxon>
        <taxon>Enterobacterales</taxon>
        <taxon>Yersiniaceae</taxon>
        <taxon>Yersinia</taxon>
    </lineage>
</organism>
<keyword id="KW-0067">ATP-binding</keyword>
<keyword id="KW-0997">Cell inner membrane</keyword>
<keyword id="KW-1003">Cell membrane</keyword>
<keyword id="KW-0406">Ion transport</keyword>
<keyword id="KW-0472">Membrane</keyword>
<keyword id="KW-0547">Nucleotide-binding</keyword>
<keyword id="KW-1278">Translocase</keyword>
<keyword id="KW-0813">Transport</keyword>
<keyword id="KW-0862">Zinc</keyword>
<keyword id="KW-0864">Zinc transport</keyword>
<reference key="1">
    <citation type="journal article" date="2006" name="J. Bacteriol.">
        <title>Complete genome sequence of Yersinia pestis strains Antiqua and Nepal516: evidence of gene reduction in an emerging pathogen.</title>
        <authorList>
            <person name="Chain P.S.G."/>
            <person name="Hu P."/>
            <person name="Malfatti S.A."/>
            <person name="Radnedge L."/>
            <person name="Larimer F."/>
            <person name="Vergez L.M."/>
            <person name="Worsham P."/>
            <person name="Chu M.C."/>
            <person name="Andersen G.L."/>
        </authorList>
    </citation>
    <scope>NUCLEOTIDE SEQUENCE [LARGE SCALE GENOMIC DNA]</scope>
    <source>
        <strain>Nepal516</strain>
    </source>
</reference>